<sequence length="454" mass="51390">MPEAFERYSSNPTYEPPWRKVRFIGIAGPSGSGKTSVAQLIVKALNLPHVVILSLDSFYKSLNAEQKKRAFNNDYDFDSPEAIDWDLLFVKLLELKQGRKVDIPIYSFNEHNRLPETNTLFGASIIILEGIFALYDEKIRSLLDVSVFLDTDSDVCLSRRLNRDINYRGRDIVGVLEQYNKFVKPSYENFVRRQLSYTDLIVPRGRDNKLAIDMVINFIRRTLSIQSETHVKNIDSLQQIVPTIPHLPLNLVQLKITPEISAIRTILINKNTHPDDLQFFLSRIGTMLMNLAGDSLAYEKKTITLHNGNQWEGLQMAKELCGVSVLRSGGTLETALCRQFPTVCLGKILVQINKVTQEPTLHYHKLPRGIATMNVVLMASHLTTHADVLMATQILVDFGVPEENIIIVVYVCYSESIKALAYIFPKVTIVTAFLESVAEPVVGRLDIEKVYYGC</sequence>
<organism>
    <name type="scientific">Schizosaccharomyces pombe (strain 972 / ATCC 24843)</name>
    <name type="common">Fission yeast</name>
    <dbReference type="NCBI Taxonomy" id="284812"/>
    <lineage>
        <taxon>Eukaryota</taxon>
        <taxon>Fungi</taxon>
        <taxon>Dikarya</taxon>
        <taxon>Ascomycota</taxon>
        <taxon>Taphrinomycotina</taxon>
        <taxon>Schizosaccharomycetes</taxon>
        <taxon>Schizosaccharomycetales</taxon>
        <taxon>Schizosaccharomycetaceae</taxon>
        <taxon>Schizosaccharomyces</taxon>
    </lineage>
</organism>
<protein>
    <recommendedName>
        <fullName>Uridine kinase</fullName>
        <ecNumber>2.7.1.48</ecNumber>
    </recommendedName>
    <alternativeName>
        <fullName>Uridine monophosphokinase</fullName>
    </alternativeName>
</protein>
<proteinExistence type="inferred from homology"/>
<feature type="chain" id="PRO_0000311758" description="Uridine kinase">
    <location>
        <begin position="1"/>
        <end position="454"/>
    </location>
</feature>
<feature type="binding site" evidence="2">
    <location>
        <begin position="28"/>
        <end position="35"/>
    </location>
    <ligand>
        <name>ATP</name>
        <dbReference type="ChEBI" id="CHEBI:30616"/>
    </ligand>
</feature>
<evidence type="ECO:0000250" key="1"/>
<evidence type="ECO:0000255" key="2"/>
<evidence type="ECO:0000269" key="3">
    <source>
    </source>
</evidence>
<evidence type="ECO:0000305" key="4"/>
<gene>
    <name type="primary">urk1</name>
    <name type="ORF">SPCC162.11c</name>
</gene>
<dbReference type="EC" id="2.7.1.48"/>
<dbReference type="EMBL" id="CU329672">
    <property type="protein sequence ID" value="CAA19591.1"/>
    <property type="molecule type" value="Genomic_DNA"/>
</dbReference>
<dbReference type="PIR" id="T41020">
    <property type="entry name" value="T41020"/>
</dbReference>
<dbReference type="RefSeq" id="NP_588233.1">
    <property type="nucleotide sequence ID" value="NM_001023223.2"/>
</dbReference>
<dbReference type="SMR" id="O74427"/>
<dbReference type="BioGRID" id="275520">
    <property type="interactions" value="236"/>
</dbReference>
<dbReference type="FunCoup" id="O74427">
    <property type="interactions" value="631"/>
</dbReference>
<dbReference type="STRING" id="284812.O74427"/>
<dbReference type="PaxDb" id="4896-SPCC162.11c.1"/>
<dbReference type="EnsemblFungi" id="SPCC162.11c.1">
    <property type="protein sequence ID" value="SPCC162.11c.1:pep"/>
    <property type="gene ID" value="SPCC162.11c"/>
</dbReference>
<dbReference type="PomBase" id="SPCC162.11c">
    <property type="gene designation" value="urk1"/>
</dbReference>
<dbReference type="VEuPathDB" id="FungiDB:SPCC162.11c"/>
<dbReference type="eggNOG" id="KOG4203">
    <property type="taxonomic scope" value="Eukaryota"/>
</dbReference>
<dbReference type="HOGENOM" id="CLU_021278_0_2_1"/>
<dbReference type="InParanoid" id="O74427"/>
<dbReference type="OMA" id="EPQLHCE"/>
<dbReference type="PhylomeDB" id="O74427"/>
<dbReference type="Reactome" id="R-SPO-73614">
    <property type="pathway name" value="Pyrimidine salvage"/>
</dbReference>
<dbReference type="UniPathway" id="UPA00574">
    <property type="reaction ID" value="UER00637"/>
</dbReference>
<dbReference type="UniPathway" id="UPA00579">
    <property type="reaction ID" value="UER00640"/>
</dbReference>
<dbReference type="PRO" id="PR:O74427"/>
<dbReference type="Proteomes" id="UP000002485">
    <property type="component" value="Chromosome III"/>
</dbReference>
<dbReference type="GO" id="GO:0032153">
    <property type="term" value="C:cell division site"/>
    <property type="evidence" value="ECO:0007005"/>
    <property type="project" value="PomBase"/>
</dbReference>
<dbReference type="GO" id="GO:0005737">
    <property type="term" value="C:cytoplasm"/>
    <property type="evidence" value="ECO:0000318"/>
    <property type="project" value="GO_Central"/>
</dbReference>
<dbReference type="GO" id="GO:0005829">
    <property type="term" value="C:cytosol"/>
    <property type="evidence" value="ECO:0007005"/>
    <property type="project" value="PomBase"/>
</dbReference>
<dbReference type="GO" id="GO:0044732">
    <property type="term" value="C:mitotic spindle pole body"/>
    <property type="evidence" value="ECO:0007005"/>
    <property type="project" value="PomBase"/>
</dbReference>
<dbReference type="GO" id="GO:0005634">
    <property type="term" value="C:nucleus"/>
    <property type="evidence" value="ECO:0007005"/>
    <property type="project" value="PomBase"/>
</dbReference>
<dbReference type="GO" id="GO:0005524">
    <property type="term" value="F:ATP binding"/>
    <property type="evidence" value="ECO:0007669"/>
    <property type="project" value="UniProtKB-KW"/>
</dbReference>
<dbReference type="GO" id="GO:0016887">
    <property type="term" value="F:ATP hydrolysis activity"/>
    <property type="evidence" value="ECO:0007669"/>
    <property type="project" value="InterPro"/>
</dbReference>
<dbReference type="GO" id="GO:0043771">
    <property type="term" value="F:cytidine kinase activity"/>
    <property type="evidence" value="ECO:0007669"/>
    <property type="project" value="RHEA"/>
</dbReference>
<dbReference type="GO" id="GO:0004845">
    <property type="term" value="F:uracil phosphoribosyltransferase activity"/>
    <property type="evidence" value="ECO:0000303"/>
    <property type="project" value="PomBase"/>
</dbReference>
<dbReference type="GO" id="GO:0004849">
    <property type="term" value="F:uridine kinase activity"/>
    <property type="evidence" value="ECO:0000318"/>
    <property type="project" value="GO_Central"/>
</dbReference>
<dbReference type="GO" id="GO:0044211">
    <property type="term" value="P:CTP salvage"/>
    <property type="evidence" value="ECO:0007669"/>
    <property type="project" value="UniProtKB-UniPathway"/>
</dbReference>
<dbReference type="GO" id="GO:0006206">
    <property type="term" value="P:pyrimidine nucleobase metabolic process"/>
    <property type="evidence" value="ECO:0000303"/>
    <property type="project" value="PomBase"/>
</dbReference>
<dbReference type="GO" id="GO:0008655">
    <property type="term" value="P:pyrimidine-containing compound salvage"/>
    <property type="evidence" value="ECO:0000318"/>
    <property type="project" value="GO_Central"/>
</dbReference>
<dbReference type="GO" id="GO:0044206">
    <property type="term" value="P:UMP salvage"/>
    <property type="evidence" value="ECO:0007669"/>
    <property type="project" value="UniProtKB-UniPathway"/>
</dbReference>
<dbReference type="CDD" id="cd02023">
    <property type="entry name" value="UMPK"/>
    <property type="match status" value="1"/>
</dbReference>
<dbReference type="FunFam" id="3.40.50.300:FF:002070">
    <property type="entry name" value="Uridine kinase"/>
    <property type="match status" value="1"/>
</dbReference>
<dbReference type="Gene3D" id="3.40.50.2020">
    <property type="match status" value="1"/>
</dbReference>
<dbReference type="Gene3D" id="3.40.50.300">
    <property type="entry name" value="P-loop containing nucleotide triphosphate hydrolases"/>
    <property type="match status" value="1"/>
</dbReference>
<dbReference type="InterPro" id="IPR003593">
    <property type="entry name" value="AAA+_ATPase"/>
</dbReference>
<dbReference type="InterPro" id="IPR027417">
    <property type="entry name" value="P-loop_NTPase"/>
</dbReference>
<dbReference type="InterPro" id="IPR000836">
    <property type="entry name" value="PRibTrfase_dom"/>
</dbReference>
<dbReference type="InterPro" id="IPR006083">
    <property type="entry name" value="PRK/URK"/>
</dbReference>
<dbReference type="InterPro" id="IPR029057">
    <property type="entry name" value="PRTase-like"/>
</dbReference>
<dbReference type="InterPro" id="IPR000764">
    <property type="entry name" value="Uridine_kinase-like"/>
</dbReference>
<dbReference type="NCBIfam" id="NF004018">
    <property type="entry name" value="PRK05480.1"/>
    <property type="match status" value="1"/>
</dbReference>
<dbReference type="NCBIfam" id="TIGR00235">
    <property type="entry name" value="udk"/>
    <property type="match status" value="1"/>
</dbReference>
<dbReference type="PANTHER" id="PTHR10285">
    <property type="entry name" value="URIDINE KINASE"/>
    <property type="match status" value="1"/>
</dbReference>
<dbReference type="Pfam" id="PF00485">
    <property type="entry name" value="PRK"/>
    <property type="match status" value="1"/>
</dbReference>
<dbReference type="Pfam" id="PF14681">
    <property type="entry name" value="UPRTase"/>
    <property type="match status" value="1"/>
</dbReference>
<dbReference type="PRINTS" id="PR00988">
    <property type="entry name" value="URIDINKINASE"/>
</dbReference>
<dbReference type="SMART" id="SM00382">
    <property type="entry name" value="AAA"/>
    <property type="match status" value="1"/>
</dbReference>
<dbReference type="SUPFAM" id="SSF52540">
    <property type="entry name" value="P-loop containing nucleoside triphosphate hydrolases"/>
    <property type="match status" value="1"/>
</dbReference>
<dbReference type="SUPFAM" id="SSF53271">
    <property type="entry name" value="PRTase-like"/>
    <property type="match status" value="1"/>
</dbReference>
<keyword id="KW-0067">ATP-binding</keyword>
<keyword id="KW-0963">Cytoplasm</keyword>
<keyword id="KW-0418">Kinase</keyword>
<keyword id="KW-0547">Nucleotide-binding</keyword>
<keyword id="KW-0539">Nucleus</keyword>
<keyword id="KW-1185">Reference proteome</keyword>
<keyword id="KW-0808">Transferase</keyword>
<accession>O74427</accession>
<name>URK1_SCHPO</name>
<comment type="function">
    <text evidence="1">Catalyzes the conversion of uridine into UMP and cytidine into CMP in the pyrimidine salvage pathway.</text>
</comment>
<comment type="catalytic activity">
    <reaction>
        <text>uridine + ATP = UMP + ADP + H(+)</text>
        <dbReference type="Rhea" id="RHEA:16825"/>
        <dbReference type="ChEBI" id="CHEBI:15378"/>
        <dbReference type="ChEBI" id="CHEBI:16704"/>
        <dbReference type="ChEBI" id="CHEBI:30616"/>
        <dbReference type="ChEBI" id="CHEBI:57865"/>
        <dbReference type="ChEBI" id="CHEBI:456216"/>
        <dbReference type="EC" id="2.7.1.48"/>
    </reaction>
</comment>
<comment type="catalytic activity">
    <reaction>
        <text>cytidine + ATP = CMP + ADP + H(+)</text>
        <dbReference type="Rhea" id="RHEA:24674"/>
        <dbReference type="ChEBI" id="CHEBI:15378"/>
        <dbReference type="ChEBI" id="CHEBI:17562"/>
        <dbReference type="ChEBI" id="CHEBI:30616"/>
        <dbReference type="ChEBI" id="CHEBI:60377"/>
        <dbReference type="ChEBI" id="CHEBI:456216"/>
        <dbReference type="EC" id="2.7.1.48"/>
    </reaction>
</comment>
<comment type="pathway">
    <text>Pyrimidine metabolism; CTP biosynthesis via salvage pathway; CTP from cytidine: step 1/3.</text>
</comment>
<comment type="pathway">
    <text>Pyrimidine metabolism; UMP biosynthesis via salvage pathway; UMP from uridine: step 1/1.</text>
</comment>
<comment type="subcellular location">
    <subcellularLocation>
        <location evidence="3">Cytoplasm</location>
    </subcellularLocation>
    <subcellularLocation>
        <location evidence="3">Nucleus</location>
    </subcellularLocation>
</comment>
<comment type="similarity">
    <text evidence="4">Belongs to the uridine kinase family.</text>
</comment>
<reference key="1">
    <citation type="journal article" date="2002" name="Nature">
        <title>The genome sequence of Schizosaccharomyces pombe.</title>
        <authorList>
            <person name="Wood V."/>
            <person name="Gwilliam R."/>
            <person name="Rajandream M.A."/>
            <person name="Lyne M.H."/>
            <person name="Lyne R."/>
            <person name="Stewart A."/>
            <person name="Sgouros J.G."/>
            <person name="Peat N."/>
            <person name="Hayles J."/>
            <person name="Baker S.G."/>
            <person name="Basham D."/>
            <person name="Bowman S."/>
            <person name="Brooks K."/>
            <person name="Brown D."/>
            <person name="Brown S."/>
            <person name="Chillingworth T."/>
            <person name="Churcher C.M."/>
            <person name="Collins M."/>
            <person name="Connor R."/>
            <person name="Cronin A."/>
            <person name="Davis P."/>
            <person name="Feltwell T."/>
            <person name="Fraser A."/>
            <person name="Gentles S."/>
            <person name="Goble A."/>
            <person name="Hamlin N."/>
            <person name="Harris D.E."/>
            <person name="Hidalgo J."/>
            <person name="Hodgson G."/>
            <person name="Holroyd S."/>
            <person name="Hornsby T."/>
            <person name="Howarth S."/>
            <person name="Huckle E.J."/>
            <person name="Hunt S."/>
            <person name="Jagels K."/>
            <person name="James K.D."/>
            <person name="Jones L."/>
            <person name="Jones M."/>
            <person name="Leather S."/>
            <person name="McDonald S."/>
            <person name="McLean J."/>
            <person name="Mooney P."/>
            <person name="Moule S."/>
            <person name="Mungall K.L."/>
            <person name="Murphy L.D."/>
            <person name="Niblett D."/>
            <person name="Odell C."/>
            <person name="Oliver K."/>
            <person name="O'Neil S."/>
            <person name="Pearson D."/>
            <person name="Quail M.A."/>
            <person name="Rabbinowitsch E."/>
            <person name="Rutherford K.M."/>
            <person name="Rutter S."/>
            <person name="Saunders D."/>
            <person name="Seeger K."/>
            <person name="Sharp S."/>
            <person name="Skelton J."/>
            <person name="Simmonds M.N."/>
            <person name="Squares R."/>
            <person name="Squares S."/>
            <person name="Stevens K."/>
            <person name="Taylor K."/>
            <person name="Taylor R.G."/>
            <person name="Tivey A."/>
            <person name="Walsh S.V."/>
            <person name="Warren T."/>
            <person name="Whitehead S."/>
            <person name="Woodward J.R."/>
            <person name="Volckaert G."/>
            <person name="Aert R."/>
            <person name="Robben J."/>
            <person name="Grymonprez B."/>
            <person name="Weltjens I."/>
            <person name="Vanstreels E."/>
            <person name="Rieger M."/>
            <person name="Schaefer M."/>
            <person name="Mueller-Auer S."/>
            <person name="Gabel C."/>
            <person name="Fuchs M."/>
            <person name="Duesterhoeft A."/>
            <person name="Fritzc C."/>
            <person name="Holzer E."/>
            <person name="Moestl D."/>
            <person name="Hilbert H."/>
            <person name="Borzym K."/>
            <person name="Langer I."/>
            <person name="Beck A."/>
            <person name="Lehrach H."/>
            <person name="Reinhardt R."/>
            <person name="Pohl T.M."/>
            <person name="Eger P."/>
            <person name="Zimmermann W."/>
            <person name="Wedler H."/>
            <person name="Wambutt R."/>
            <person name="Purnelle B."/>
            <person name="Goffeau A."/>
            <person name="Cadieu E."/>
            <person name="Dreano S."/>
            <person name="Gloux S."/>
            <person name="Lelaure V."/>
            <person name="Mottier S."/>
            <person name="Galibert F."/>
            <person name="Aves S.J."/>
            <person name="Xiang Z."/>
            <person name="Hunt C."/>
            <person name="Moore K."/>
            <person name="Hurst S.M."/>
            <person name="Lucas M."/>
            <person name="Rochet M."/>
            <person name="Gaillardin C."/>
            <person name="Tallada V.A."/>
            <person name="Garzon A."/>
            <person name="Thode G."/>
            <person name="Daga R.R."/>
            <person name="Cruzado L."/>
            <person name="Jimenez J."/>
            <person name="Sanchez M."/>
            <person name="del Rey F."/>
            <person name="Benito J."/>
            <person name="Dominguez A."/>
            <person name="Revuelta J.L."/>
            <person name="Moreno S."/>
            <person name="Armstrong J."/>
            <person name="Forsburg S.L."/>
            <person name="Cerutti L."/>
            <person name="Lowe T."/>
            <person name="McCombie W.R."/>
            <person name="Paulsen I."/>
            <person name="Potashkin J."/>
            <person name="Shpakovski G.V."/>
            <person name="Ussery D."/>
            <person name="Barrell B.G."/>
            <person name="Nurse P."/>
        </authorList>
    </citation>
    <scope>NUCLEOTIDE SEQUENCE [LARGE SCALE GENOMIC DNA]</scope>
    <source>
        <strain>972 / ATCC 24843</strain>
    </source>
</reference>
<reference key="2">
    <citation type="journal article" date="2006" name="Nat. Biotechnol.">
        <title>ORFeome cloning and global analysis of protein localization in the fission yeast Schizosaccharomyces pombe.</title>
        <authorList>
            <person name="Matsuyama A."/>
            <person name="Arai R."/>
            <person name="Yashiroda Y."/>
            <person name="Shirai A."/>
            <person name="Kamata A."/>
            <person name="Sekido S."/>
            <person name="Kobayashi Y."/>
            <person name="Hashimoto A."/>
            <person name="Hamamoto M."/>
            <person name="Hiraoka Y."/>
            <person name="Horinouchi S."/>
            <person name="Yoshida M."/>
        </authorList>
    </citation>
    <scope>SUBCELLULAR LOCATION [LARGE SCALE ANALYSIS]</scope>
</reference>